<proteinExistence type="inferred from homology"/>
<organism>
    <name type="scientific">Buchnera aphidicola subsp. Baizongia pistaciae (strain Bp)</name>
    <dbReference type="NCBI Taxonomy" id="224915"/>
    <lineage>
        <taxon>Bacteria</taxon>
        <taxon>Pseudomonadati</taxon>
        <taxon>Pseudomonadota</taxon>
        <taxon>Gammaproteobacteria</taxon>
        <taxon>Enterobacterales</taxon>
        <taxon>Erwiniaceae</taxon>
        <taxon>Buchnera</taxon>
    </lineage>
</organism>
<keyword id="KW-0963">Cytoplasm</keyword>
<keyword id="KW-1015">Disulfide bond</keyword>
<keyword id="KW-0274">FAD</keyword>
<keyword id="KW-0285">Flavoprotein</keyword>
<keyword id="KW-0521">NADP</keyword>
<keyword id="KW-0560">Oxidoreductase</keyword>
<keyword id="KW-0676">Redox-active center</keyword>
<keyword id="KW-1185">Reference proteome</keyword>
<accession>Q89AJ2</accession>
<name>TRXB_BUCBP</name>
<comment type="catalytic activity">
    <reaction>
        <text>[thioredoxin]-dithiol + NADP(+) = [thioredoxin]-disulfide + NADPH + H(+)</text>
        <dbReference type="Rhea" id="RHEA:20345"/>
        <dbReference type="Rhea" id="RHEA-COMP:10698"/>
        <dbReference type="Rhea" id="RHEA-COMP:10700"/>
        <dbReference type="ChEBI" id="CHEBI:15378"/>
        <dbReference type="ChEBI" id="CHEBI:29950"/>
        <dbReference type="ChEBI" id="CHEBI:50058"/>
        <dbReference type="ChEBI" id="CHEBI:57783"/>
        <dbReference type="ChEBI" id="CHEBI:58349"/>
        <dbReference type="EC" id="1.8.1.9"/>
    </reaction>
</comment>
<comment type="cofactor">
    <cofactor evidence="1">
        <name>FAD</name>
        <dbReference type="ChEBI" id="CHEBI:57692"/>
    </cofactor>
    <text evidence="1">Binds 1 FAD per subunit.</text>
</comment>
<comment type="subunit">
    <text evidence="1">Homodimer.</text>
</comment>
<comment type="subcellular location">
    <subcellularLocation>
        <location>Cytoplasm</location>
    </subcellularLocation>
</comment>
<comment type="miscellaneous">
    <text>The active site is a redox-active disulfide bond.</text>
</comment>
<comment type="similarity">
    <text evidence="2">Belongs to the class-II pyridine nucleotide-disulfide oxidoreductase family.</text>
</comment>
<gene>
    <name type="primary">trxB</name>
    <name type="ordered locus">bbp_291</name>
</gene>
<dbReference type="EC" id="1.8.1.9"/>
<dbReference type="EMBL" id="AE016826">
    <property type="protein sequence ID" value="AAO27016.1"/>
    <property type="molecule type" value="Genomic_DNA"/>
</dbReference>
<dbReference type="RefSeq" id="WP_011091417.1">
    <property type="nucleotide sequence ID" value="NC_004545.1"/>
</dbReference>
<dbReference type="SMR" id="Q89AJ2"/>
<dbReference type="STRING" id="224915.bbp_291"/>
<dbReference type="KEGG" id="bab:bbp_291"/>
<dbReference type="eggNOG" id="COG0492">
    <property type="taxonomic scope" value="Bacteria"/>
</dbReference>
<dbReference type="HOGENOM" id="CLU_031864_5_1_6"/>
<dbReference type="OrthoDB" id="9806179at2"/>
<dbReference type="Proteomes" id="UP000000601">
    <property type="component" value="Chromosome"/>
</dbReference>
<dbReference type="GO" id="GO:0005737">
    <property type="term" value="C:cytoplasm"/>
    <property type="evidence" value="ECO:0007669"/>
    <property type="project" value="UniProtKB-SubCell"/>
</dbReference>
<dbReference type="GO" id="GO:0004791">
    <property type="term" value="F:thioredoxin-disulfide reductase (NADPH) activity"/>
    <property type="evidence" value="ECO:0007669"/>
    <property type="project" value="UniProtKB-EC"/>
</dbReference>
<dbReference type="GO" id="GO:0019430">
    <property type="term" value="P:removal of superoxide radicals"/>
    <property type="evidence" value="ECO:0007669"/>
    <property type="project" value="InterPro"/>
</dbReference>
<dbReference type="Gene3D" id="3.50.50.60">
    <property type="entry name" value="FAD/NAD(P)-binding domain"/>
    <property type="match status" value="2"/>
</dbReference>
<dbReference type="InterPro" id="IPR036188">
    <property type="entry name" value="FAD/NAD-bd_sf"/>
</dbReference>
<dbReference type="InterPro" id="IPR023753">
    <property type="entry name" value="FAD/NAD-binding_dom"/>
</dbReference>
<dbReference type="InterPro" id="IPR050097">
    <property type="entry name" value="Ferredoxin-NADP_redctase_2"/>
</dbReference>
<dbReference type="InterPro" id="IPR008255">
    <property type="entry name" value="Pyr_nucl-diS_OxRdtase_2_AS"/>
</dbReference>
<dbReference type="InterPro" id="IPR005982">
    <property type="entry name" value="Thioredox_Rdtase"/>
</dbReference>
<dbReference type="NCBIfam" id="TIGR01292">
    <property type="entry name" value="TRX_reduct"/>
    <property type="match status" value="1"/>
</dbReference>
<dbReference type="PANTHER" id="PTHR48105">
    <property type="entry name" value="THIOREDOXIN REDUCTASE 1-RELATED-RELATED"/>
    <property type="match status" value="1"/>
</dbReference>
<dbReference type="Pfam" id="PF07992">
    <property type="entry name" value="Pyr_redox_2"/>
    <property type="match status" value="1"/>
</dbReference>
<dbReference type="PRINTS" id="PR00368">
    <property type="entry name" value="FADPNR"/>
</dbReference>
<dbReference type="PRINTS" id="PR00469">
    <property type="entry name" value="PNDRDTASEII"/>
</dbReference>
<dbReference type="SUPFAM" id="SSF51905">
    <property type="entry name" value="FAD/NAD(P)-binding domain"/>
    <property type="match status" value="1"/>
</dbReference>
<dbReference type="PROSITE" id="PS00573">
    <property type="entry name" value="PYRIDINE_REDOX_2"/>
    <property type="match status" value="1"/>
</dbReference>
<reference key="1">
    <citation type="journal article" date="2003" name="Proc. Natl. Acad. Sci. U.S.A.">
        <title>Reductive genome evolution in Buchnera aphidicola.</title>
        <authorList>
            <person name="van Ham R.C.H.J."/>
            <person name="Kamerbeek J."/>
            <person name="Palacios C."/>
            <person name="Rausell C."/>
            <person name="Abascal F."/>
            <person name="Bastolla U."/>
            <person name="Fernandez J.M."/>
            <person name="Jimenez L."/>
            <person name="Postigo M."/>
            <person name="Silva F.J."/>
            <person name="Tamames J."/>
            <person name="Viguera E."/>
            <person name="Latorre A."/>
            <person name="Valencia A."/>
            <person name="Moran F."/>
            <person name="Moya A."/>
        </authorList>
    </citation>
    <scope>NUCLEOTIDE SEQUENCE [LARGE SCALE GENOMIC DNA]</scope>
    <source>
        <strain>Bp</strain>
    </source>
</reference>
<evidence type="ECO:0000250" key="1">
    <source>
        <dbReference type="UniProtKB" id="P0A9P4"/>
    </source>
</evidence>
<evidence type="ECO:0000305" key="2"/>
<sequence length="326" mass="35695">MIENTLKIEHHKLIILGSGPAGYTAAIYSARANLEPLLFTGNNKGGQLINTNEIENWPGDSKSLTGLELMERMHNHAKSLNTKIIPNEIIRVNFFKIPFLLVSDTNQYYTSDSVIIATGASPKYLGLTSESKFIGKGVSVCAVCDGFFYKNEDVAVVGGGNTALEEALYLSNIARKVYLIHRRKTFSAEKILISRMLNKTKKNIILRTGCIVNKIIGGVNGVRGVQITCNDSKENKCLINLSGVFIAIGHAPNTKLFKNQLFMKNDYILVKSGIHGNVTQTNIPGIFAAGDVIDHVYKQAITSSASGCMAALDAEKYIDQKYGFKI</sequence>
<protein>
    <recommendedName>
        <fullName>Thioredoxin reductase</fullName>
        <shortName>TRXR</shortName>
        <ecNumber>1.8.1.9</ecNumber>
    </recommendedName>
</protein>
<feature type="chain" id="PRO_0000166723" description="Thioredoxin reductase">
    <location>
        <begin position="1"/>
        <end position="326"/>
    </location>
</feature>
<feature type="binding site" evidence="1">
    <location>
        <begin position="40"/>
        <end position="47"/>
    </location>
    <ligand>
        <name>FAD</name>
        <dbReference type="ChEBI" id="CHEBI:57692"/>
    </ligand>
</feature>
<feature type="binding site" evidence="1">
    <location>
        <begin position="291"/>
        <end position="300"/>
    </location>
    <ligand>
        <name>FAD</name>
        <dbReference type="ChEBI" id="CHEBI:57692"/>
    </ligand>
</feature>
<feature type="disulfide bond" description="Redox-active" evidence="1">
    <location>
        <begin position="141"/>
        <end position="144"/>
    </location>
</feature>